<name>DPO4_COLP3</name>
<dbReference type="EC" id="2.7.7.7" evidence="1"/>
<dbReference type="EMBL" id="CP000083">
    <property type="protein sequence ID" value="AAZ27501.1"/>
    <property type="molecule type" value="Genomic_DNA"/>
</dbReference>
<dbReference type="RefSeq" id="WP_011041883.1">
    <property type="nucleotide sequence ID" value="NC_003910.7"/>
</dbReference>
<dbReference type="SMR" id="Q487H6"/>
<dbReference type="STRING" id="167879.CPS_1040"/>
<dbReference type="KEGG" id="cps:CPS_1040"/>
<dbReference type="eggNOG" id="COG0389">
    <property type="taxonomic scope" value="Bacteria"/>
</dbReference>
<dbReference type="HOGENOM" id="CLU_012348_1_2_6"/>
<dbReference type="Proteomes" id="UP000000547">
    <property type="component" value="Chromosome"/>
</dbReference>
<dbReference type="GO" id="GO:0005829">
    <property type="term" value="C:cytosol"/>
    <property type="evidence" value="ECO:0007669"/>
    <property type="project" value="TreeGrafter"/>
</dbReference>
<dbReference type="GO" id="GO:0003684">
    <property type="term" value="F:damaged DNA binding"/>
    <property type="evidence" value="ECO:0007669"/>
    <property type="project" value="InterPro"/>
</dbReference>
<dbReference type="GO" id="GO:0003887">
    <property type="term" value="F:DNA-directed DNA polymerase activity"/>
    <property type="evidence" value="ECO:0007669"/>
    <property type="project" value="UniProtKB-UniRule"/>
</dbReference>
<dbReference type="GO" id="GO:0000287">
    <property type="term" value="F:magnesium ion binding"/>
    <property type="evidence" value="ECO:0007669"/>
    <property type="project" value="UniProtKB-UniRule"/>
</dbReference>
<dbReference type="GO" id="GO:0006261">
    <property type="term" value="P:DNA-templated DNA replication"/>
    <property type="evidence" value="ECO:0007669"/>
    <property type="project" value="UniProtKB-UniRule"/>
</dbReference>
<dbReference type="GO" id="GO:0042276">
    <property type="term" value="P:error-prone translesion synthesis"/>
    <property type="evidence" value="ECO:0007669"/>
    <property type="project" value="TreeGrafter"/>
</dbReference>
<dbReference type="GO" id="GO:0009432">
    <property type="term" value="P:SOS response"/>
    <property type="evidence" value="ECO:0007669"/>
    <property type="project" value="TreeGrafter"/>
</dbReference>
<dbReference type="CDD" id="cd03586">
    <property type="entry name" value="PolY_Pol_IV_kappa"/>
    <property type="match status" value="1"/>
</dbReference>
<dbReference type="FunFam" id="3.30.70.270:FF:000002">
    <property type="entry name" value="DNA polymerase IV"/>
    <property type="match status" value="1"/>
</dbReference>
<dbReference type="Gene3D" id="3.30.70.270">
    <property type="match status" value="1"/>
</dbReference>
<dbReference type="Gene3D" id="3.40.1170.60">
    <property type="match status" value="1"/>
</dbReference>
<dbReference type="Gene3D" id="1.10.150.20">
    <property type="entry name" value="5' to 3' exonuclease, C-terminal subdomain"/>
    <property type="match status" value="1"/>
</dbReference>
<dbReference type="Gene3D" id="3.30.1490.100">
    <property type="entry name" value="DNA polymerase, Y-family, little finger domain"/>
    <property type="match status" value="1"/>
</dbReference>
<dbReference type="HAMAP" id="MF_01113">
    <property type="entry name" value="DNApol_IV"/>
    <property type="match status" value="1"/>
</dbReference>
<dbReference type="InterPro" id="IPR043502">
    <property type="entry name" value="DNA/RNA_pol_sf"/>
</dbReference>
<dbReference type="InterPro" id="IPR036775">
    <property type="entry name" value="DNA_pol_Y-fam_lit_finger_sf"/>
</dbReference>
<dbReference type="InterPro" id="IPR017961">
    <property type="entry name" value="DNA_pol_Y-fam_little_finger"/>
</dbReference>
<dbReference type="InterPro" id="IPR050116">
    <property type="entry name" value="DNA_polymerase-Y"/>
</dbReference>
<dbReference type="InterPro" id="IPR022880">
    <property type="entry name" value="DNApol_IV"/>
</dbReference>
<dbReference type="InterPro" id="IPR053848">
    <property type="entry name" value="IMS_HHH_1"/>
</dbReference>
<dbReference type="InterPro" id="IPR043128">
    <property type="entry name" value="Rev_trsase/Diguanyl_cyclase"/>
</dbReference>
<dbReference type="InterPro" id="IPR001126">
    <property type="entry name" value="UmuC"/>
</dbReference>
<dbReference type="NCBIfam" id="NF002677">
    <property type="entry name" value="PRK02406.1"/>
    <property type="match status" value="1"/>
</dbReference>
<dbReference type="PANTHER" id="PTHR11076:SF33">
    <property type="entry name" value="DNA POLYMERASE KAPPA"/>
    <property type="match status" value="1"/>
</dbReference>
<dbReference type="PANTHER" id="PTHR11076">
    <property type="entry name" value="DNA REPAIR POLYMERASE UMUC / TRANSFERASE FAMILY MEMBER"/>
    <property type="match status" value="1"/>
</dbReference>
<dbReference type="Pfam" id="PF00817">
    <property type="entry name" value="IMS"/>
    <property type="match status" value="1"/>
</dbReference>
<dbReference type="Pfam" id="PF11799">
    <property type="entry name" value="IMS_C"/>
    <property type="match status" value="1"/>
</dbReference>
<dbReference type="Pfam" id="PF21999">
    <property type="entry name" value="IMS_HHH_1"/>
    <property type="match status" value="1"/>
</dbReference>
<dbReference type="SUPFAM" id="SSF56672">
    <property type="entry name" value="DNA/RNA polymerases"/>
    <property type="match status" value="1"/>
</dbReference>
<dbReference type="SUPFAM" id="SSF100879">
    <property type="entry name" value="Lesion bypass DNA polymerase (Y-family), little finger domain"/>
    <property type="match status" value="1"/>
</dbReference>
<dbReference type="PROSITE" id="PS50173">
    <property type="entry name" value="UMUC"/>
    <property type="match status" value="1"/>
</dbReference>
<proteinExistence type="inferred from homology"/>
<sequence>MGNQKKIIHIDMDCFYAAIEMRDFPEYQNIPLAVGGDGPRSVLCTSNYQARQFGVRSAMPAIKAKQLCPHLKIVHGRMDVYKETSKNIREIFSRYTDLIEPLSLDEAYLDVTDATMCQGSATLIAERIRADIFNELNLTASAGIAPNKFLAKIASDENKPNGQCVITPDKVANFVEQLSLKKIPGIGPKTFEKLNRHGYVTCADVRQSNIRALQNIVGKFANSLYLKSHGVDNRDLEVSRQRKSLAIETTLAHDISTQDECKLVIDSLYQKLLTRLAPHSNREIIRQGVKLKFTDFNQTTVETQSNECQQALFISLLSKAYSRSNKRGVRLVGLTLGFADSPGESQQLSLSL</sequence>
<reference key="1">
    <citation type="journal article" date="2005" name="Proc. Natl. Acad. Sci. U.S.A.">
        <title>The psychrophilic lifestyle as revealed by the genome sequence of Colwellia psychrerythraea 34H through genomic and proteomic analyses.</title>
        <authorList>
            <person name="Methe B.A."/>
            <person name="Nelson K.E."/>
            <person name="Deming J.W."/>
            <person name="Momen B."/>
            <person name="Melamud E."/>
            <person name="Zhang X."/>
            <person name="Moult J."/>
            <person name="Madupu R."/>
            <person name="Nelson W.C."/>
            <person name="Dodson R.J."/>
            <person name="Brinkac L.M."/>
            <person name="Daugherty S.C."/>
            <person name="Durkin A.S."/>
            <person name="DeBoy R.T."/>
            <person name="Kolonay J.F."/>
            <person name="Sullivan S.A."/>
            <person name="Zhou L."/>
            <person name="Davidsen T.M."/>
            <person name="Wu M."/>
            <person name="Huston A.L."/>
            <person name="Lewis M."/>
            <person name="Weaver B."/>
            <person name="Weidman J.F."/>
            <person name="Khouri H."/>
            <person name="Utterback T.R."/>
            <person name="Feldblyum T.V."/>
            <person name="Fraser C.M."/>
        </authorList>
    </citation>
    <scope>NUCLEOTIDE SEQUENCE [LARGE SCALE GENOMIC DNA]</scope>
    <source>
        <strain>34H / ATCC BAA-681</strain>
    </source>
</reference>
<evidence type="ECO:0000255" key="1">
    <source>
        <dbReference type="HAMAP-Rule" id="MF_01113"/>
    </source>
</evidence>
<protein>
    <recommendedName>
        <fullName evidence="1">DNA polymerase IV</fullName>
        <shortName evidence="1">Pol IV</shortName>
        <ecNumber evidence="1">2.7.7.7</ecNumber>
    </recommendedName>
</protein>
<organism>
    <name type="scientific">Colwellia psychrerythraea (strain 34H / ATCC BAA-681)</name>
    <name type="common">Vibrio psychroerythus</name>
    <dbReference type="NCBI Taxonomy" id="167879"/>
    <lineage>
        <taxon>Bacteria</taxon>
        <taxon>Pseudomonadati</taxon>
        <taxon>Pseudomonadota</taxon>
        <taxon>Gammaproteobacteria</taxon>
        <taxon>Alteromonadales</taxon>
        <taxon>Colwelliaceae</taxon>
        <taxon>Colwellia</taxon>
    </lineage>
</organism>
<feature type="chain" id="PRO_1000137126" description="DNA polymerase IV">
    <location>
        <begin position="1"/>
        <end position="352"/>
    </location>
</feature>
<feature type="domain" description="UmuC" evidence="1">
    <location>
        <begin position="7"/>
        <end position="187"/>
    </location>
</feature>
<feature type="active site" evidence="1">
    <location>
        <position position="106"/>
    </location>
</feature>
<feature type="binding site" evidence="1">
    <location>
        <position position="11"/>
    </location>
    <ligand>
        <name>Mg(2+)</name>
        <dbReference type="ChEBI" id="CHEBI:18420"/>
    </ligand>
</feature>
<feature type="binding site" evidence="1">
    <location>
        <position position="105"/>
    </location>
    <ligand>
        <name>Mg(2+)</name>
        <dbReference type="ChEBI" id="CHEBI:18420"/>
    </ligand>
</feature>
<feature type="site" description="Substrate discrimination" evidence="1">
    <location>
        <position position="16"/>
    </location>
</feature>
<gene>
    <name evidence="1" type="primary">dinB</name>
    <name type="ordered locus">CPS_1040</name>
</gene>
<accession>Q487H6</accession>
<keyword id="KW-0963">Cytoplasm</keyword>
<keyword id="KW-0227">DNA damage</keyword>
<keyword id="KW-0234">DNA repair</keyword>
<keyword id="KW-0235">DNA replication</keyword>
<keyword id="KW-0238">DNA-binding</keyword>
<keyword id="KW-0239">DNA-directed DNA polymerase</keyword>
<keyword id="KW-0460">Magnesium</keyword>
<keyword id="KW-0479">Metal-binding</keyword>
<keyword id="KW-0515">Mutator protein</keyword>
<keyword id="KW-0548">Nucleotidyltransferase</keyword>
<keyword id="KW-0808">Transferase</keyword>
<comment type="function">
    <text evidence="1">Poorly processive, error-prone DNA polymerase involved in untargeted mutagenesis. Copies undamaged DNA at stalled replication forks, which arise in vivo from mismatched or misaligned primer ends. These misaligned primers can be extended by PolIV. Exhibits no 3'-5' exonuclease (proofreading) activity. May be involved in translesional synthesis, in conjunction with the beta clamp from PolIII.</text>
</comment>
<comment type="catalytic activity">
    <reaction evidence="1">
        <text>DNA(n) + a 2'-deoxyribonucleoside 5'-triphosphate = DNA(n+1) + diphosphate</text>
        <dbReference type="Rhea" id="RHEA:22508"/>
        <dbReference type="Rhea" id="RHEA-COMP:17339"/>
        <dbReference type="Rhea" id="RHEA-COMP:17340"/>
        <dbReference type="ChEBI" id="CHEBI:33019"/>
        <dbReference type="ChEBI" id="CHEBI:61560"/>
        <dbReference type="ChEBI" id="CHEBI:173112"/>
        <dbReference type="EC" id="2.7.7.7"/>
    </reaction>
</comment>
<comment type="cofactor">
    <cofactor evidence="1">
        <name>Mg(2+)</name>
        <dbReference type="ChEBI" id="CHEBI:18420"/>
    </cofactor>
    <text evidence="1">Binds 2 magnesium ions per subunit.</text>
</comment>
<comment type="subunit">
    <text evidence="1">Monomer.</text>
</comment>
<comment type="subcellular location">
    <subcellularLocation>
        <location evidence="1">Cytoplasm</location>
    </subcellularLocation>
</comment>
<comment type="similarity">
    <text evidence="1">Belongs to the DNA polymerase type-Y family.</text>
</comment>